<sequence length="191" mass="21072">MRNAKITRKTKETDIQMELELDGTGSSNIDTGIGFFDHMLTSFAKHGNLDLIIEATGDLIVDEHHLIEDTAIVLGQALSEALGDKDGIARFGDARIPMDEALADVVLDLGGRTYLVMKAEFEAPRVGEMNTQLVRHFFESLTDNSKMNLHIAVTGYNDHHKIEALFKAFAYALRRAVKIEGEGIKSTKGVL</sequence>
<keyword id="KW-0028">Amino-acid biosynthesis</keyword>
<keyword id="KW-0963">Cytoplasm</keyword>
<keyword id="KW-0368">Histidine biosynthesis</keyword>
<keyword id="KW-0456">Lyase</keyword>
<evidence type="ECO:0000255" key="1">
    <source>
        <dbReference type="HAMAP-Rule" id="MF_00076"/>
    </source>
</evidence>
<feature type="chain" id="PRO_1000010295" description="Imidazoleglycerol-phosphate dehydratase">
    <location>
        <begin position="1"/>
        <end position="191"/>
    </location>
</feature>
<protein>
    <recommendedName>
        <fullName evidence="1">Imidazoleglycerol-phosphate dehydratase</fullName>
        <shortName evidence="1">IGPD</shortName>
        <ecNumber evidence="1">4.2.1.19</ecNumber>
    </recommendedName>
</protein>
<dbReference type="EC" id="4.2.1.19" evidence="1"/>
<dbReference type="EMBL" id="CP000300">
    <property type="protein sequence ID" value="ABE52251.1"/>
    <property type="molecule type" value="Genomic_DNA"/>
</dbReference>
<dbReference type="RefSeq" id="WP_011499396.1">
    <property type="nucleotide sequence ID" value="NC_007955.1"/>
</dbReference>
<dbReference type="SMR" id="Q12WC5"/>
<dbReference type="STRING" id="259564.Mbur_1333"/>
<dbReference type="GeneID" id="3997549"/>
<dbReference type="KEGG" id="mbu:Mbur_1333"/>
<dbReference type="HOGENOM" id="CLU_044308_3_0_2"/>
<dbReference type="OrthoDB" id="103579at2157"/>
<dbReference type="UniPathway" id="UPA00031">
    <property type="reaction ID" value="UER00011"/>
</dbReference>
<dbReference type="Proteomes" id="UP000001979">
    <property type="component" value="Chromosome"/>
</dbReference>
<dbReference type="GO" id="GO:0005737">
    <property type="term" value="C:cytoplasm"/>
    <property type="evidence" value="ECO:0007669"/>
    <property type="project" value="UniProtKB-SubCell"/>
</dbReference>
<dbReference type="GO" id="GO:0004424">
    <property type="term" value="F:imidazoleglycerol-phosphate dehydratase activity"/>
    <property type="evidence" value="ECO:0007669"/>
    <property type="project" value="UniProtKB-UniRule"/>
</dbReference>
<dbReference type="GO" id="GO:0000105">
    <property type="term" value="P:L-histidine biosynthetic process"/>
    <property type="evidence" value="ECO:0007669"/>
    <property type="project" value="UniProtKB-UniRule"/>
</dbReference>
<dbReference type="CDD" id="cd07914">
    <property type="entry name" value="IGPD"/>
    <property type="match status" value="1"/>
</dbReference>
<dbReference type="FunFam" id="3.30.230.40:FF:000001">
    <property type="entry name" value="Imidazoleglycerol-phosphate dehydratase HisB"/>
    <property type="match status" value="1"/>
</dbReference>
<dbReference type="FunFam" id="3.30.230.40:FF:000003">
    <property type="entry name" value="Imidazoleglycerol-phosphate dehydratase HisB"/>
    <property type="match status" value="1"/>
</dbReference>
<dbReference type="Gene3D" id="3.30.230.40">
    <property type="entry name" value="Imidazole glycerol phosphate dehydratase, domain 1"/>
    <property type="match status" value="2"/>
</dbReference>
<dbReference type="HAMAP" id="MF_00076">
    <property type="entry name" value="HisB"/>
    <property type="match status" value="1"/>
</dbReference>
<dbReference type="InterPro" id="IPR038494">
    <property type="entry name" value="IGPD_sf"/>
</dbReference>
<dbReference type="InterPro" id="IPR000807">
    <property type="entry name" value="ImidazoleglycerolP_deHydtase"/>
</dbReference>
<dbReference type="InterPro" id="IPR020565">
    <property type="entry name" value="ImidazoleglycerP_deHydtase_CS"/>
</dbReference>
<dbReference type="InterPro" id="IPR020568">
    <property type="entry name" value="Ribosomal_Su5_D2-typ_SF"/>
</dbReference>
<dbReference type="NCBIfam" id="NF002111">
    <property type="entry name" value="PRK00951.2-1"/>
    <property type="match status" value="1"/>
</dbReference>
<dbReference type="NCBIfam" id="NF002114">
    <property type="entry name" value="PRK00951.2-4"/>
    <property type="match status" value="1"/>
</dbReference>
<dbReference type="PANTHER" id="PTHR23133:SF2">
    <property type="entry name" value="IMIDAZOLEGLYCEROL-PHOSPHATE DEHYDRATASE"/>
    <property type="match status" value="1"/>
</dbReference>
<dbReference type="PANTHER" id="PTHR23133">
    <property type="entry name" value="IMIDAZOLEGLYCEROL-PHOSPHATE DEHYDRATASE HIS7"/>
    <property type="match status" value="1"/>
</dbReference>
<dbReference type="Pfam" id="PF00475">
    <property type="entry name" value="IGPD"/>
    <property type="match status" value="1"/>
</dbReference>
<dbReference type="SUPFAM" id="SSF54211">
    <property type="entry name" value="Ribosomal protein S5 domain 2-like"/>
    <property type="match status" value="2"/>
</dbReference>
<dbReference type="PROSITE" id="PS00954">
    <property type="entry name" value="IGP_DEHYDRATASE_1"/>
    <property type="match status" value="1"/>
</dbReference>
<dbReference type="PROSITE" id="PS00955">
    <property type="entry name" value="IGP_DEHYDRATASE_2"/>
    <property type="match status" value="1"/>
</dbReference>
<proteinExistence type="inferred from homology"/>
<gene>
    <name evidence="1" type="primary">hisB</name>
    <name type="ordered locus">Mbur_1333</name>
</gene>
<comment type="catalytic activity">
    <reaction evidence="1">
        <text>D-erythro-1-(imidazol-4-yl)glycerol 3-phosphate = 3-(imidazol-4-yl)-2-oxopropyl phosphate + H2O</text>
        <dbReference type="Rhea" id="RHEA:11040"/>
        <dbReference type="ChEBI" id="CHEBI:15377"/>
        <dbReference type="ChEBI" id="CHEBI:57766"/>
        <dbReference type="ChEBI" id="CHEBI:58278"/>
        <dbReference type="EC" id="4.2.1.19"/>
    </reaction>
</comment>
<comment type="pathway">
    <text evidence="1">Amino-acid biosynthesis; L-histidine biosynthesis; L-histidine from 5-phospho-alpha-D-ribose 1-diphosphate: step 6/9.</text>
</comment>
<comment type="subcellular location">
    <subcellularLocation>
        <location evidence="1">Cytoplasm</location>
    </subcellularLocation>
</comment>
<comment type="similarity">
    <text evidence="1">Belongs to the imidazoleglycerol-phosphate dehydratase family.</text>
</comment>
<organism>
    <name type="scientific">Methanococcoides burtonii (strain DSM 6242 / NBRC 107633 / OCM 468 / ACE-M)</name>
    <dbReference type="NCBI Taxonomy" id="259564"/>
    <lineage>
        <taxon>Archaea</taxon>
        <taxon>Methanobacteriati</taxon>
        <taxon>Methanobacteriota</taxon>
        <taxon>Stenosarchaea group</taxon>
        <taxon>Methanomicrobia</taxon>
        <taxon>Methanosarcinales</taxon>
        <taxon>Methanosarcinaceae</taxon>
        <taxon>Methanococcoides</taxon>
    </lineage>
</organism>
<name>HIS7_METBU</name>
<accession>Q12WC5</accession>
<reference key="1">
    <citation type="journal article" date="2009" name="ISME J.">
        <title>The genome sequence of the psychrophilic archaeon, Methanococcoides burtonii: the role of genome evolution in cold adaptation.</title>
        <authorList>
            <person name="Allen M.A."/>
            <person name="Lauro F.M."/>
            <person name="Williams T.J."/>
            <person name="Burg D."/>
            <person name="Siddiqui K.S."/>
            <person name="De Francisci D."/>
            <person name="Chong K.W."/>
            <person name="Pilak O."/>
            <person name="Chew H.H."/>
            <person name="De Maere M.Z."/>
            <person name="Ting L."/>
            <person name="Katrib M."/>
            <person name="Ng C."/>
            <person name="Sowers K.R."/>
            <person name="Galperin M.Y."/>
            <person name="Anderson I.J."/>
            <person name="Ivanova N."/>
            <person name="Dalin E."/>
            <person name="Martinez M."/>
            <person name="Lapidus A."/>
            <person name="Hauser L."/>
            <person name="Land M."/>
            <person name="Thomas T."/>
            <person name="Cavicchioli R."/>
        </authorList>
    </citation>
    <scope>NUCLEOTIDE SEQUENCE [LARGE SCALE GENOMIC DNA]</scope>
    <source>
        <strain>DSM 6242 / NBRC 107633 / OCM 468 / ACE-M</strain>
    </source>
</reference>